<gene>
    <name evidence="1" type="primary">rsmA</name>
    <name evidence="1" type="synonym">ksgA</name>
    <name type="ordered locus">Reut_A0500</name>
</gene>
<protein>
    <recommendedName>
        <fullName evidence="1">Ribosomal RNA small subunit methyltransferase A</fullName>
        <ecNumber evidence="1">2.1.1.182</ecNumber>
    </recommendedName>
    <alternativeName>
        <fullName evidence="1">16S rRNA (adenine(1518)-N(6)/adenine(1519)-N(6))-dimethyltransferase</fullName>
    </alternativeName>
    <alternativeName>
        <fullName evidence="1">16S rRNA dimethyladenosine transferase</fullName>
    </alternativeName>
    <alternativeName>
        <fullName evidence="1">16S rRNA dimethylase</fullName>
    </alternativeName>
    <alternativeName>
        <fullName evidence="1">S-adenosylmethionine-6-N', N'-adenosyl(rRNA) dimethyltransferase</fullName>
    </alternativeName>
</protein>
<accession>Q475Q1</accession>
<evidence type="ECO:0000255" key="1">
    <source>
        <dbReference type="HAMAP-Rule" id="MF_00607"/>
    </source>
</evidence>
<organism>
    <name type="scientific">Cupriavidus pinatubonensis (strain JMP 134 / LMG 1197)</name>
    <name type="common">Cupriavidus necator (strain JMP 134)</name>
    <dbReference type="NCBI Taxonomy" id="264198"/>
    <lineage>
        <taxon>Bacteria</taxon>
        <taxon>Pseudomonadati</taxon>
        <taxon>Pseudomonadota</taxon>
        <taxon>Betaproteobacteria</taxon>
        <taxon>Burkholderiales</taxon>
        <taxon>Burkholderiaceae</taxon>
        <taxon>Cupriavidus</taxon>
    </lineage>
</organism>
<name>RSMA_CUPPJ</name>
<proteinExistence type="inferred from homology"/>
<sequence length="278" mass="31189">MRSNMHQGHVARKRFGQNFLVDDSIIHGIVNAINPLADDVLVEIGPGLGALTDPLLERVPQMQVVELDRDLVERLRRRYGDRLQVHAGDALAFDFGRLAVPGRPLRIVGNLPYNISSPLLFHLMDYADHVHDQHFMLQKEVVDRMVAEPGSKAFGRLSIMLQVRYHMEHVLDVPPGSFNPPPKVDSAVVRMIPWPRTESGRLRSPHADCDITVLGDLVTAAFSQRRKVLRNTLSFLRDQIDFEAIGFDLGRRAEEVPVGEYVELARRLGGDASDRSAA</sequence>
<reference key="1">
    <citation type="journal article" date="2010" name="PLoS ONE">
        <title>The complete multipartite genome sequence of Cupriavidus necator JMP134, a versatile pollutant degrader.</title>
        <authorList>
            <person name="Lykidis A."/>
            <person name="Perez-Pantoja D."/>
            <person name="Ledger T."/>
            <person name="Mavromatis K."/>
            <person name="Anderson I.J."/>
            <person name="Ivanova N.N."/>
            <person name="Hooper S.D."/>
            <person name="Lapidus A."/>
            <person name="Lucas S."/>
            <person name="Gonzalez B."/>
            <person name="Kyrpides N.C."/>
        </authorList>
    </citation>
    <scope>NUCLEOTIDE SEQUENCE [LARGE SCALE GENOMIC DNA]</scope>
    <source>
        <strain>JMP134 / LMG 1197</strain>
    </source>
</reference>
<comment type="function">
    <text evidence="1">Specifically dimethylates two adjacent adenosines (A1518 and A1519) in the loop of a conserved hairpin near the 3'-end of 16S rRNA in the 30S particle. May play a critical role in biogenesis of 30S subunits.</text>
</comment>
<comment type="catalytic activity">
    <reaction evidence="1">
        <text>adenosine(1518)/adenosine(1519) in 16S rRNA + 4 S-adenosyl-L-methionine = N(6)-dimethyladenosine(1518)/N(6)-dimethyladenosine(1519) in 16S rRNA + 4 S-adenosyl-L-homocysteine + 4 H(+)</text>
        <dbReference type="Rhea" id="RHEA:19609"/>
        <dbReference type="Rhea" id="RHEA-COMP:10232"/>
        <dbReference type="Rhea" id="RHEA-COMP:10233"/>
        <dbReference type="ChEBI" id="CHEBI:15378"/>
        <dbReference type="ChEBI" id="CHEBI:57856"/>
        <dbReference type="ChEBI" id="CHEBI:59789"/>
        <dbReference type="ChEBI" id="CHEBI:74411"/>
        <dbReference type="ChEBI" id="CHEBI:74493"/>
        <dbReference type="EC" id="2.1.1.182"/>
    </reaction>
</comment>
<comment type="subcellular location">
    <subcellularLocation>
        <location evidence="1">Cytoplasm</location>
    </subcellularLocation>
</comment>
<comment type="similarity">
    <text evidence="1">Belongs to the class I-like SAM-binding methyltransferase superfamily. rRNA adenine N(6)-methyltransferase family. RsmA subfamily.</text>
</comment>
<feature type="chain" id="PRO_0000257328" description="Ribosomal RNA small subunit methyltransferase A">
    <location>
        <begin position="1"/>
        <end position="278"/>
    </location>
</feature>
<feature type="binding site" evidence="1">
    <location>
        <position position="18"/>
    </location>
    <ligand>
        <name>S-adenosyl-L-methionine</name>
        <dbReference type="ChEBI" id="CHEBI:59789"/>
    </ligand>
</feature>
<feature type="binding site" evidence="1">
    <location>
        <position position="20"/>
    </location>
    <ligand>
        <name>S-adenosyl-L-methionine</name>
        <dbReference type="ChEBI" id="CHEBI:59789"/>
    </ligand>
</feature>
<feature type="binding site" evidence="1">
    <location>
        <position position="45"/>
    </location>
    <ligand>
        <name>S-adenosyl-L-methionine</name>
        <dbReference type="ChEBI" id="CHEBI:59789"/>
    </ligand>
</feature>
<feature type="binding site" evidence="1">
    <location>
        <position position="66"/>
    </location>
    <ligand>
        <name>S-adenosyl-L-methionine</name>
        <dbReference type="ChEBI" id="CHEBI:59789"/>
    </ligand>
</feature>
<feature type="binding site" evidence="1">
    <location>
        <position position="89"/>
    </location>
    <ligand>
        <name>S-adenosyl-L-methionine</name>
        <dbReference type="ChEBI" id="CHEBI:59789"/>
    </ligand>
</feature>
<feature type="binding site" evidence="1">
    <location>
        <position position="110"/>
    </location>
    <ligand>
        <name>S-adenosyl-L-methionine</name>
        <dbReference type="ChEBI" id="CHEBI:59789"/>
    </ligand>
</feature>
<dbReference type="EC" id="2.1.1.182" evidence="1"/>
<dbReference type="EMBL" id="CP000090">
    <property type="protein sequence ID" value="AAZ59882.1"/>
    <property type="molecule type" value="Genomic_DNA"/>
</dbReference>
<dbReference type="SMR" id="Q475Q1"/>
<dbReference type="STRING" id="264198.Reut_A0500"/>
<dbReference type="KEGG" id="reu:Reut_A0500"/>
<dbReference type="eggNOG" id="COG0030">
    <property type="taxonomic scope" value="Bacteria"/>
</dbReference>
<dbReference type="HOGENOM" id="CLU_041220_0_1_4"/>
<dbReference type="OrthoDB" id="9814755at2"/>
<dbReference type="GO" id="GO:0005829">
    <property type="term" value="C:cytosol"/>
    <property type="evidence" value="ECO:0007669"/>
    <property type="project" value="TreeGrafter"/>
</dbReference>
<dbReference type="GO" id="GO:0052908">
    <property type="term" value="F:16S rRNA (adenine(1518)-N(6)/adenine(1519)-N(6))-dimethyltransferase activity"/>
    <property type="evidence" value="ECO:0007669"/>
    <property type="project" value="UniProtKB-EC"/>
</dbReference>
<dbReference type="GO" id="GO:0003723">
    <property type="term" value="F:RNA binding"/>
    <property type="evidence" value="ECO:0007669"/>
    <property type="project" value="UniProtKB-KW"/>
</dbReference>
<dbReference type="FunFam" id="1.10.8.100:FF:000001">
    <property type="entry name" value="Ribosomal RNA small subunit methyltransferase A"/>
    <property type="match status" value="1"/>
</dbReference>
<dbReference type="Gene3D" id="1.10.8.100">
    <property type="entry name" value="Ribosomal RNA adenine dimethylase-like, domain 2"/>
    <property type="match status" value="1"/>
</dbReference>
<dbReference type="Gene3D" id="3.40.50.150">
    <property type="entry name" value="Vaccinia Virus protein VP39"/>
    <property type="match status" value="1"/>
</dbReference>
<dbReference type="HAMAP" id="MF_00607">
    <property type="entry name" value="16SrRNA_methyltr_A"/>
    <property type="match status" value="1"/>
</dbReference>
<dbReference type="InterPro" id="IPR001737">
    <property type="entry name" value="KsgA/Erm"/>
</dbReference>
<dbReference type="InterPro" id="IPR023165">
    <property type="entry name" value="rRNA_Ade_diMease-like_C"/>
</dbReference>
<dbReference type="InterPro" id="IPR020596">
    <property type="entry name" value="rRNA_Ade_Mease_Trfase_CS"/>
</dbReference>
<dbReference type="InterPro" id="IPR020598">
    <property type="entry name" value="rRNA_Ade_methylase_Trfase_N"/>
</dbReference>
<dbReference type="InterPro" id="IPR011530">
    <property type="entry name" value="rRNA_adenine_dimethylase"/>
</dbReference>
<dbReference type="InterPro" id="IPR029063">
    <property type="entry name" value="SAM-dependent_MTases_sf"/>
</dbReference>
<dbReference type="NCBIfam" id="TIGR00755">
    <property type="entry name" value="ksgA"/>
    <property type="match status" value="1"/>
</dbReference>
<dbReference type="PANTHER" id="PTHR11727">
    <property type="entry name" value="DIMETHYLADENOSINE TRANSFERASE"/>
    <property type="match status" value="1"/>
</dbReference>
<dbReference type="PANTHER" id="PTHR11727:SF7">
    <property type="entry name" value="DIMETHYLADENOSINE TRANSFERASE-RELATED"/>
    <property type="match status" value="1"/>
</dbReference>
<dbReference type="Pfam" id="PF00398">
    <property type="entry name" value="RrnaAD"/>
    <property type="match status" value="1"/>
</dbReference>
<dbReference type="SMART" id="SM00650">
    <property type="entry name" value="rADc"/>
    <property type="match status" value="1"/>
</dbReference>
<dbReference type="SUPFAM" id="SSF53335">
    <property type="entry name" value="S-adenosyl-L-methionine-dependent methyltransferases"/>
    <property type="match status" value="1"/>
</dbReference>
<dbReference type="PROSITE" id="PS01131">
    <property type="entry name" value="RRNA_A_DIMETH"/>
    <property type="match status" value="1"/>
</dbReference>
<dbReference type="PROSITE" id="PS51689">
    <property type="entry name" value="SAM_RNA_A_N6_MT"/>
    <property type="match status" value="1"/>
</dbReference>
<keyword id="KW-0963">Cytoplasm</keyword>
<keyword id="KW-0489">Methyltransferase</keyword>
<keyword id="KW-0694">RNA-binding</keyword>
<keyword id="KW-0698">rRNA processing</keyword>
<keyword id="KW-0949">S-adenosyl-L-methionine</keyword>
<keyword id="KW-0808">Transferase</keyword>